<evidence type="ECO:0000255" key="1">
    <source>
        <dbReference type="HAMAP-Rule" id="MF_01569"/>
    </source>
</evidence>
<feature type="chain" id="PRO_1000069148" description="Proline--tRNA ligase">
    <location>
        <begin position="1"/>
        <end position="577"/>
    </location>
</feature>
<proteinExistence type="inferred from homology"/>
<keyword id="KW-0030">Aminoacyl-tRNA synthetase</keyword>
<keyword id="KW-0067">ATP-binding</keyword>
<keyword id="KW-0963">Cytoplasm</keyword>
<keyword id="KW-0436">Ligase</keyword>
<keyword id="KW-0547">Nucleotide-binding</keyword>
<keyword id="KW-0648">Protein biosynthesis</keyword>
<keyword id="KW-1185">Reference proteome</keyword>
<organism>
    <name type="scientific">Limosilactobacillus reuteri (strain DSM 20016)</name>
    <name type="common">Lactobacillus reuteri</name>
    <dbReference type="NCBI Taxonomy" id="557436"/>
    <lineage>
        <taxon>Bacteria</taxon>
        <taxon>Bacillati</taxon>
        <taxon>Bacillota</taxon>
        <taxon>Bacilli</taxon>
        <taxon>Lactobacillales</taxon>
        <taxon>Lactobacillaceae</taxon>
        <taxon>Limosilactobacillus</taxon>
    </lineage>
</organism>
<dbReference type="EC" id="6.1.1.15" evidence="1"/>
<dbReference type="EMBL" id="CP000705">
    <property type="protein sequence ID" value="ABQ82958.1"/>
    <property type="molecule type" value="Genomic_DNA"/>
</dbReference>
<dbReference type="RefSeq" id="WP_003668190.1">
    <property type="nucleotide sequence ID" value="NC_009513.1"/>
</dbReference>
<dbReference type="SMR" id="A5VJD4"/>
<dbReference type="STRING" id="557436.Lreu_0693"/>
<dbReference type="KEGG" id="lre:Lreu_0693"/>
<dbReference type="PATRIC" id="fig|557436.17.peg.562"/>
<dbReference type="eggNOG" id="COG0442">
    <property type="taxonomic scope" value="Bacteria"/>
</dbReference>
<dbReference type="HOGENOM" id="CLU_016739_0_0_9"/>
<dbReference type="Proteomes" id="UP000001991">
    <property type="component" value="Chromosome"/>
</dbReference>
<dbReference type="GO" id="GO:0005829">
    <property type="term" value="C:cytosol"/>
    <property type="evidence" value="ECO:0007669"/>
    <property type="project" value="TreeGrafter"/>
</dbReference>
<dbReference type="GO" id="GO:0002161">
    <property type="term" value="F:aminoacyl-tRNA deacylase activity"/>
    <property type="evidence" value="ECO:0007669"/>
    <property type="project" value="InterPro"/>
</dbReference>
<dbReference type="GO" id="GO:0005524">
    <property type="term" value="F:ATP binding"/>
    <property type="evidence" value="ECO:0007669"/>
    <property type="project" value="UniProtKB-UniRule"/>
</dbReference>
<dbReference type="GO" id="GO:0140096">
    <property type="term" value="F:catalytic activity, acting on a protein"/>
    <property type="evidence" value="ECO:0007669"/>
    <property type="project" value="UniProtKB-ARBA"/>
</dbReference>
<dbReference type="GO" id="GO:0004827">
    <property type="term" value="F:proline-tRNA ligase activity"/>
    <property type="evidence" value="ECO:0007669"/>
    <property type="project" value="UniProtKB-UniRule"/>
</dbReference>
<dbReference type="GO" id="GO:0016740">
    <property type="term" value="F:transferase activity"/>
    <property type="evidence" value="ECO:0007669"/>
    <property type="project" value="UniProtKB-ARBA"/>
</dbReference>
<dbReference type="GO" id="GO:0006433">
    <property type="term" value="P:prolyl-tRNA aminoacylation"/>
    <property type="evidence" value="ECO:0007669"/>
    <property type="project" value="UniProtKB-UniRule"/>
</dbReference>
<dbReference type="CDD" id="cd04334">
    <property type="entry name" value="ProRS-INS"/>
    <property type="match status" value="1"/>
</dbReference>
<dbReference type="CDD" id="cd00861">
    <property type="entry name" value="ProRS_anticodon_short"/>
    <property type="match status" value="1"/>
</dbReference>
<dbReference type="CDD" id="cd00779">
    <property type="entry name" value="ProRS_core_prok"/>
    <property type="match status" value="1"/>
</dbReference>
<dbReference type="FunFam" id="3.40.50.800:FF:000011">
    <property type="entry name" value="Proline--tRNA ligase"/>
    <property type="match status" value="1"/>
</dbReference>
<dbReference type="Gene3D" id="3.40.50.800">
    <property type="entry name" value="Anticodon-binding domain"/>
    <property type="match status" value="1"/>
</dbReference>
<dbReference type="Gene3D" id="3.30.930.10">
    <property type="entry name" value="Bira Bifunctional Protein, Domain 2"/>
    <property type="match status" value="2"/>
</dbReference>
<dbReference type="Gene3D" id="3.90.960.10">
    <property type="entry name" value="YbaK/aminoacyl-tRNA synthetase-associated domain"/>
    <property type="match status" value="1"/>
</dbReference>
<dbReference type="HAMAP" id="MF_01569">
    <property type="entry name" value="Pro_tRNA_synth_type1"/>
    <property type="match status" value="1"/>
</dbReference>
<dbReference type="InterPro" id="IPR002314">
    <property type="entry name" value="aa-tRNA-synt_IIb"/>
</dbReference>
<dbReference type="InterPro" id="IPR006195">
    <property type="entry name" value="aa-tRNA-synth_II"/>
</dbReference>
<dbReference type="InterPro" id="IPR045864">
    <property type="entry name" value="aa-tRNA-synth_II/BPL/LPL"/>
</dbReference>
<dbReference type="InterPro" id="IPR004154">
    <property type="entry name" value="Anticodon-bd"/>
</dbReference>
<dbReference type="InterPro" id="IPR036621">
    <property type="entry name" value="Anticodon-bd_dom_sf"/>
</dbReference>
<dbReference type="InterPro" id="IPR002316">
    <property type="entry name" value="Pro-tRNA-ligase_IIa"/>
</dbReference>
<dbReference type="InterPro" id="IPR004500">
    <property type="entry name" value="Pro-tRNA-synth_IIa_bac-type"/>
</dbReference>
<dbReference type="InterPro" id="IPR023717">
    <property type="entry name" value="Pro-tRNA-Synthase_IIa_type1"/>
</dbReference>
<dbReference type="InterPro" id="IPR050062">
    <property type="entry name" value="Pro-tRNA_synthetase"/>
</dbReference>
<dbReference type="InterPro" id="IPR044140">
    <property type="entry name" value="ProRS_anticodon_short"/>
</dbReference>
<dbReference type="InterPro" id="IPR033730">
    <property type="entry name" value="ProRS_core_prok"/>
</dbReference>
<dbReference type="InterPro" id="IPR036754">
    <property type="entry name" value="YbaK/aa-tRNA-synt-asso_dom_sf"/>
</dbReference>
<dbReference type="InterPro" id="IPR007214">
    <property type="entry name" value="YbaK/aa-tRNA-synth-assoc-dom"/>
</dbReference>
<dbReference type="NCBIfam" id="NF006625">
    <property type="entry name" value="PRK09194.1"/>
    <property type="match status" value="1"/>
</dbReference>
<dbReference type="NCBIfam" id="TIGR00409">
    <property type="entry name" value="proS_fam_II"/>
    <property type="match status" value="1"/>
</dbReference>
<dbReference type="PANTHER" id="PTHR42753">
    <property type="entry name" value="MITOCHONDRIAL RIBOSOME PROTEIN L39/PROLYL-TRNA LIGASE FAMILY MEMBER"/>
    <property type="match status" value="1"/>
</dbReference>
<dbReference type="PANTHER" id="PTHR42753:SF2">
    <property type="entry name" value="PROLINE--TRNA LIGASE"/>
    <property type="match status" value="1"/>
</dbReference>
<dbReference type="Pfam" id="PF03129">
    <property type="entry name" value="HGTP_anticodon"/>
    <property type="match status" value="1"/>
</dbReference>
<dbReference type="Pfam" id="PF00587">
    <property type="entry name" value="tRNA-synt_2b"/>
    <property type="match status" value="1"/>
</dbReference>
<dbReference type="Pfam" id="PF04073">
    <property type="entry name" value="tRNA_edit"/>
    <property type="match status" value="1"/>
</dbReference>
<dbReference type="PRINTS" id="PR01046">
    <property type="entry name" value="TRNASYNTHPRO"/>
</dbReference>
<dbReference type="SUPFAM" id="SSF52954">
    <property type="entry name" value="Class II aaRS ABD-related"/>
    <property type="match status" value="1"/>
</dbReference>
<dbReference type="SUPFAM" id="SSF55681">
    <property type="entry name" value="Class II aaRS and biotin synthetases"/>
    <property type="match status" value="1"/>
</dbReference>
<dbReference type="SUPFAM" id="SSF55826">
    <property type="entry name" value="YbaK/ProRS associated domain"/>
    <property type="match status" value="1"/>
</dbReference>
<dbReference type="PROSITE" id="PS50862">
    <property type="entry name" value="AA_TRNA_LIGASE_II"/>
    <property type="match status" value="1"/>
</dbReference>
<sequence>MKQSKVLIPTKKEAPSDAEALSHKMMIRAGYIYQVSAGVWSYLPLAYRVIRKVENIIRDEMDKAGAVEMLMPGLLPADLWKESGRYESYGDNLFKLKDRRDRDFILGPTHEETFTEVLRDSIKSYKKLPLVVYQLQDKFRDEDRPRYGILRGKEFEMLDGYSFSADQEGLDEAYNNQAKAYRNIFDRIGLNYKVILADSGTMGGKNSQEFSAPAEVGEDIIAYTDGDYAANIEKAESKFTGVQQTAVPAPIEKKATPGAHTVYEAAESLDLDPNQVIKSMLYIAKMSEDEYQPVLVLMRGDDEVNEAKVINALDCEELELATEEDAEKYLNAHPGSLGPVGVGEEVKILADNYVKVLVNMACGANEDGYHYVNANIDRDFRVDQFGDFRNVKEGEIAPDGQPLKFTPGIEIGHIFKLGTHYSSKLGAQVLDSNGRLTDVIMGSYGIGVTRLLSAVAEQNADENGLVWPDSIAPFDVHVIPVNAKKEDQMAMADKIDQQLTEAGYEVLVDDRKERAGVKFADSDLIGIPIRVTVGKKAQDGIVEIKIRKTGETVEVKQEELVNTVGILLKQLNEEKNK</sequence>
<comment type="function">
    <text evidence="1">Catalyzes the attachment of proline to tRNA(Pro) in a two-step reaction: proline is first activated by ATP to form Pro-AMP and then transferred to the acceptor end of tRNA(Pro). As ProRS can inadvertently accommodate and process non-cognate amino acids such as alanine and cysteine, to avoid such errors it has two additional distinct editing activities against alanine. One activity is designated as 'pretransfer' editing and involves the tRNA(Pro)-independent hydrolysis of activated Ala-AMP. The other activity is designated 'posttransfer' editing and involves deacylation of mischarged Ala-tRNA(Pro). The misacylated Cys-tRNA(Pro) is not edited by ProRS.</text>
</comment>
<comment type="catalytic activity">
    <reaction evidence="1">
        <text>tRNA(Pro) + L-proline + ATP = L-prolyl-tRNA(Pro) + AMP + diphosphate</text>
        <dbReference type="Rhea" id="RHEA:14305"/>
        <dbReference type="Rhea" id="RHEA-COMP:9700"/>
        <dbReference type="Rhea" id="RHEA-COMP:9702"/>
        <dbReference type="ChEBI" id="CHEBI:30616"/>
        <dbReference type="ChEBI" id="CHEBI:33019"/>
        <dbReference type="ChEBI" id="CHEBI:60039"/>
        <dbReference type="ChEBI" id="CHEBI:78442"/>
        <dbReference type="ChEBI" id="CHEBI:78532"/>
        <dbReference type="ChEBI" id="CHEBI:456215"/>
        <dbReference type="EC" id="6.1.1.15"/>
    </reaction>
</comment>
<comment type="subunit">
    <text evidence="1">Homodimer.</text>
</comment>
<comment type="subcellular location">
    <subcellularLocation>
        <location evidence="1">Cytoplasm</location>
    </subcellularLocation>
</comment>
<comment type="domain">
    <text evidence="1">Consists of three domains: the N-terminal catalytic domain, the editing domain and the C-terminal anticodon-binding domain.</text>
</comment>
<comment type="similarity">
    <text evidence="1">Belongs to the class-II aminoacyl-tRNA synthetase family. ProS type 1 subfamily.</text>
</comment>
<protein>
    <recommendedName>
        <fullName evidence="1">Proline--tRNA ligase</fullName>
        <ecNumber evidence="1">6.1.1.15</ecNumber>
    </recommendedName>
    <alternativeName>
        <fullName evidence="1">Prolyl-tRNA synthetase</fullName>
        <shortName evidence="1">ProRS</shortName>
    </alternativeName>
</protein>
<accession>A5VJD4</accession>
<reference key="1">
    <citation type="journal article" date="2011" name="PLoS Genet.">
        <title>The evolution of host specialization in the vertebrate gut symbiont Lactobacillus reuteri.</title>
        <authorList>
            <person name="Frese S.A."/>
            <person name="Benson A.K."/>
            <person name="Tannock G.W."/>
            <person name="Loach D.M."/>
            <person name="Kim J."/>
            <person name="Zhang M."/>
            <person name="Oh P.L."/>
            <person name="Heng N.C."/>
            <person name="Patil P.B."/>
            <person name="Juge N."/>
            <person name="Mackenzie D.A."/>
            <person name="Pearson B.M."/>
            <person name="Lapidus A."/>
            <person name="Dalin E."/>
            <person name="Tice H."/>
            <person name="Goltsman E."/>
            <person name="Land M."/>
            <person name="Hauser L."/>
            <person name="Ivanova N."/>
            <person name="Kyrpides N.C."/>
            <person name="Walter J."/>
        </authorList>
    </citation>
    <scope>NUCLEOTIDE SEQUENCE [LARGE SCALE GENOMIC DNA]</scope>
    <source>
        <strain>DSM 20016</strain>
    </source>
</reference>
<name>SYP_LIMRD</name>
<gene>
    <name evidence="1" type="primary">proS</name>
    <name type="ordered locus">Lreu_0693</name>
</gene>